<name>VMAC_HUMAN</name>
<evidence type="ECO:0000250" key="1"/>
<evidence type="ECO:0000255" key="2"/>
<evidence type="ECO:0000256" key="3">
    <source>
        <dbReference type="SAM" id="MobiDB-lite"/>
    </source>
</evidence>
<keyword id="KW-0175">Coiled coil</keyword>
<keyword id="KW-0963">Cytoplasm</keyword>
<keyword id="KW-1267">Proteomics identification</keyword>
<keyword id="KW-1185">Reference proteome</keyword>
<protein>
    <recommendedName>
        <fullName>Vimentin-type intermediate filament-associated coiled-coil protein</fullName>
    </recommendedName>
</protein>
<reference key="1">
    <citation type="journal article" date="2004" name="Nat. Genet.">
        <title>Complete sequencing and characterization of 21,243 full-length human cDNAs.</title>
        <authorList>
            <person name="Ota T."/>
            <person name="Suzuki Y."/>
            <person name="Nishikawa T."/>
            <person name="Otsuki T."/>
            <person name="Sugiyama T."/>
            <person name="Irie R."/>
            <person name="Wakamatsu A."/>
            <person name="Hayashi K."/>
            <person name="Sato H."/>
            <person name="Nagai K."/>
            <person name="Kimura K."/>
            <person name="Makita H."/>
            <person name="Sekine M."/>
            <person name="Obayashi M."/>
            <person name="Nishi T."/>
            <person name="Shibahara T."/>
            <person name="Tanaka T."/>
            <person name="Ishii S."/>
            <person name="Yamamoto J."/>
            <person name="Saito K."/>
            <person name="Kawai Y."/>
            <person name="Isono Y."/>
            <person name="Nakamura Y."/>
            <person name="Nagahari K."/>
            <person name="Murakami K."/>
            <person name="Yasuda T."/>
            <person name="Iwayanagi T."/>
            <person name="Wagatsuma M."/>
            <person name="Shiratori A."/>
            <person name="Sudo H."/>
            <person name="Hosoiri T."/>
            <person name="Kaku Y."/>
            <person name="Kodaira H."/>
            <person name="Kondo H."/>
            <person name="Sugawara M."/>
            <person name="Takahashi M."/>
            <person name="Kanda K."/>
            <person name="Yokoi T."/>
            <person name="Furuya T."/>
            <person name="Kikkawa E."/>
            <person name="Omura Y."/>
            <person name="Abe K."/>
            <person name="Kamihara K."/>
            <person name="Katsuta N."/>
            <person name="Sato K."/>
            <person name="Tanikawa M."/>
            <person name="Yamazaki M."/>
            <person name="Ninomiya K."/>
            <person name="Ishibashi T."/>
            <person name="Yamashita H."/>
            <person name="Murakawa K."/>
            <person name="Fujimori K."/>
            <person name="Tanai H."/>
            <person name="Kimata M."/>
            <person name="Watanabe M."/>
            <person name="Hiraoka S."/>
            <person name="Chiba Y."/>
            <person name="Ishida S."/>
            <person name="Ono Y."/>
            <person name="Takiguchi S."/>
            <person name="Watanabe S."/>
            <person name="Yosida M."/>
            <person name="Hotuta T."/>
            <person name="Kusano J."/>
            <person name="Kanehori K."/>
            <person name="Takahashi-Fujii A."/>
            <person name="Hara H."/>
            <person name="Tanase T.-O."/>
            <person name="Nomura Y."/>
            <person name="Togiya S."/>
            <person name="Komai F."/>
            <person name="Hara R."/>
            <person name="Takeuchi K."/>
            <person name="Arita M."/>
            <person name="Imose N."/>
            <person name="Musashino K."/>
            <person name="Yuuki H."/>
            <person name="Oshima A."/>
            <person name="Sasaki N."/>
            <person name="Aotsuka S."/>
            <person name="Yoshikawa Y."/>
            <person name="Matsunawa H."/>
            <person name="Ichihara T."/>
            <person name="Shiohata N."/>
            <person name="Sano S."/>
            <person name="Moriya S."/>
            <person name="Momiyama H."/>
            <person name="Satoh N."/>
            <person name="Takami S."/>
            <person name="Terashima Y."/>
            <person name="Suzuki O."/>
            <person name="Nakagawa S."/>
            <person name="Senoh A."/>
            <person name="Mizoguchi H."/>
            <person name="Goto Y."/>
            <person name="Shimizu F."/>
            <person name="Wakebe H."/>
            <person name="Hishigaki H."/>
            <person name="Watanabe T."/>
            <person name="Sugiyama A."/>
            <person name="Takemoto M."/>
            <person name="Kawakami B."/>
            <person name="Yamazaki M."/>
            <person name="Watanabe K."/>
            <person name="Kumagai A."/>
            <person name="Itakura S."/>
            <person name="Fukuzumi Y."/>
            <person name="Fujimori Y."/>
            <person name="Komiyama M."/>
            <person name="Tashiro H."/>
            <person name="Tanigami A."/>
            <person name="Fujiwara T."/>
            <person name="Ono T."/>
            <person name="Yamada K."/>
            <person name="Fujii Y."/>
            <person name="Ozaki K."/>
            <person name="Hirao M."/>
            <person name="Ohmori Y."/>
            <person name="Kawabata A."/>
            <person name="Hikiji T."/>
            <person name="Kobatake N."/>
            <person name="Inagaki H."/>
            <person name="Ikema Y."/>
            <person name="Okamoto S."/>
            <person name="Okitani R."/>
            <person name="Kawakami T."/>
            <person name="Noguchi S."/>
            <person name="Itoh T."/>
            <person name="Shigeta K."/>
            <person name="Senba T."/>
            <person name="Matsumura K."/>
            <person name="Nakajima Y."/>
            <person name="Mizuno T."/>
            <person name="Morinaga M."/>
            <person name="Sasaki M."/>
            <person name="Togashi T."/>
            <person name="Oyama M."/>
            <person name="Hata H."/>
            <person name="Watanabe M."/>
            <person name="Komatsu T."/>
            <person name="Mizushima-Sugano J."/>
            <person name="Satoh T."/>
            <person name="Shirai Y."/>
            <person name="Takahashi Y."/>
            <person name="Nakagawa K."/>
            <person name="Okumura K."/>
            <person name="Nagase T."/>
            <person name="Nomura N."/>
            <person name="Kikuchi H."/>
            <person name="Masuho Y."/>
            <person name="Yamashita R."/>
            <person name="Nakai K."/>
            <person name="Yada T."/>
            <person name="Nakamura Y."/>
            <person name="Ohara O."/>
            <person name="Isogai T."/>
            <person name="Sugano S."/>
        </authorList>
    </citation>
    <scope>NUCLEOTIDE SEQUENCE [LARGE SCALE MRNA]</scope>
    <source>
        <tissue>Thymus</tissue>
    </source>
</reference>
<reference key="2">
    <citation type="journal article" date="2004" name="Genome Res.">
        <title>The status, quality, and expansion of the NIH full-length cDNA project: the Mammalian Gene Collection (MGC).</title>
        <authorList>
            <consortium name="The MGC Project Team"/>
        </authorList>
    </citation>
    <scope>NUCLEOTIDE SEQUENCE [LARGE SCALE MRNA]</scope>
    <source>
        <tissue>Cervix</tissue>
    </source>
</reference>
<accession>Q2NL98</accession>
<accession>B3KW55</accession>
<gene>
    <name type="primary">VMAC</name>
</gene>
<sequence>MSAPPALQIREANAHLAAVHRRAAELEARLDAAERTVHAQAERLALHDQQLRAALDELGRAKDREIATLQEQLMTSEATVHSLQATVHQRDELIRQLQPRAELLQDICRRRPPLAGLLDALAEAERLGPLPASDPGHPPPGGPGPPLDNSTGEEADRDHLQPAVFGTTV</sequence>
<feature type="chain" id="PRO_0000319066" description="Vimentin-type intermediate filament-associated coiled-coil protein">
    <location>
        <begin position="1"/>
        <end position="169"/>
    </location>
</feature>
<feature type="region of interest" description="Disordered" evidence="3">
    <location>
        <begin position="126"/>
        <end position="169"/>
    </location>
</feature>
<feature type="coiled-coil region" evidence="2">
    <location>
        <begin position="7"/>
        <end position="89"/>
    </location>
</feature>
<feature type="compositionally biased region" description="Low complexity" evidence="3">
    <location>
        <begin position="126"/>
        <end position="135"/>
    </location>
</feature>
<feature type="compositionally biased region" description="Pro residues" evidence="3">
    <location>
        <begin position="136"/>
        <end position="146"/>
    </location>
</feature>
<comment type="interaction">
    <interactant intactId="EBI-2803134">
        <id>Q2NL98</id>
    </interactant>
    <interactant intactId="EBI-11524452">
        <id>Q8N9N5-2</id>
        <label>BANP</label>
    </interactant>
    <organismsDiffer>false</organismsDiffer>
    <experiments>4</experiments>
</comment>
<comment type="interaction">
    <interactant intactId="EBI-2803134">
        <id>Q2NL98</id>
    </interactant>
    <interactant intactId="EBI-2556193">
        <id>Q63ZY3</id>
        <label>KANK2</label>
    </interactant>
    <organismsDiffer>false</organismsDiffer>
    <experiments>3</experiments>
</comment>
<comment type="interaction">
    <interactant intactId="EBI-2803134">
        <id>Q2NL98</id>
    </interactant>
    <interactant intactId="EBI-11959475">
        <id>P25791-3</id>
        <label>LMO2</label>
    </interactant>
    <organismsDiffer>false</organismsDiffer>
    <experiments>3</experiments>
</comment>
<comment type="interaction">
    <interactant intactId="EBI-2803134">
        <id>Q2NL98</id>
    </interactant>
    <interactant intactId="EBI-11742507">
        <id>Q8TAP4-4</id>
        <label>LMO3</label>
    </interactant>
    <organismsDiffer>false</organismsDiffer>
    <experiments>3</experiments>
</comment>
<comment type="interaction">
    <interactant intactId="EBI-2803134">
        <id>Q2NL98</id>
    </interactant>
    <interactant intactId="EBI-2798728">
        <id>P61968</id>
        <label>LMO4</label>
    </interactant>
    <organismsDiffer>false</organismsDiffer>
    <experiments>3</experiments>
</comment>
<comment type="interaction">
    <interactant intactId="EBI-2803134">
        <id>Q2NL98</id>
    </interactant>
    <interactant intactId="EBI-739832">
        <id>Q8TBB1</id>
        <label>LNX1</label>
    </interactant>
    <organismsDiffer>false</organismsDiffer>
    <experiments>3</experiments>
</comment>
<comment type="interaction">
    <interactant intactId="EBI-2803134">
        <id>Q2NL98</id>
    </interactant>
    <interactant intactId="EBI-6165879">
        <id>Q96IV0</id>
        <label>NGLY1</label>
    </interactant>
    <organismsDiffer>false</organismsDiffer>
    <experiments>3</experiments>
</comment>
<comment type="interaction">
    <interactant intactId="EBI-2803134">
        <id>Q2NL98</id>
    </interactant>
    <interactant intactId="EBI-359352">
        <id>P25786</id>
        <label>PSMA1</label>
    </interactant>
    <organismsDiffer>false</organismsDiffer>
    <experiments>3</experiments>
</comment>
<comment type="interaction">
    <interactant intactId="EBI-2803134">
        <id>Q2NL98</id>
    </interactant>
    <interactant intactId="EBI-12000762">
        <id>Q7Z5V6-2</id>
        <label>SAXO4</label>
    </interactant>
    <organismsDiffer>false</organismsDiffer>
    <experiments>3</experiments>
</comment>
<comment type="interaction">
    <interactant intactId="EBI-2803134">
        <id>Q2NL98</id>
    </interactant>
    <interactant intactId="EBI-748391">
        <id>Q9BWG6</id>
        <label>SCNM1</label>
    </interactant>
    <organismsDiffer>false</organismsDiffer>
    <experiments>3</experiments>
</comment>
<comment type="interaction">
    <interactant intactId="EBI-2803134">
        <id>Q2NL98</id>
    </interactant>
    <interactant intactId="EBI-2801316">
        <id>Q58EX2</id>
        <label>SDK2</label>
    </interactant>
    <organismsDiffer>false</organismsDiffer>
    <experiments>3</experiments>
</comment>
<comment type="interaction">
    <interactant intactId="EBI-2803134">
        <id>Q2NL98</id>
    </interactant>
    <interactant intactId="EBI-742688">
        <id>Q9NZD8</id>
        <label>SPG21</label>
    </interactant>
    <organismsDiffer>false</organismsDiffer>
    <experiments>3</experiments>
</comment>
<comment type="interaction">
    <interactant intactId="EBI-2803134">
        <id>Q2NL98</id>
    </interactant>
    <interactant intactId="EBI-2514218">
        <id>Q01664</id>
        <label>TFAP4</label>
    </interactant>
    <organismsDiffer>false</organismsDiffer>
    <experiments>3</experiments>
</comment>
<comment type="interaction">
    <interactant intactId="EBI-2803134">
        <id>Q2NL98</id>
    </interactant>
    <interactant intactId="EBI-739899">
        <id>P24278</id>
        <label>ZBTB25</label>
    </interactant>
    <organismsDiffer>false</organismsDiffer>
    <experiments>3</experiments>
</comment>
<comment type="interaction">
    <interactant intactId="EBI-2803134">
        <id>Q2NL98</id>
    </interactant>
    <interactant intactId="EBI-2560158">
        <id>Q5BKZ1</id>
        <label>ZNF326</label>
    </interactant>
    <organismsDiffer>false</organismsDiffer>
    <experiments>3</experiments>
</comment>
<comment type="interaction">
    <interactant intactId="EBI-2803134">
        <id>Q2NL98</id>
    </interactant>
    <interactant intactId="EBI-12013828">
        <id>P51504</id>
        <label>ZNF80</label>
    </interactant>
    <organismsDiffer>false</organismsDiffer>
    <experiments>3</experiments>
</comment>
<comment type="subcellular location">
    <subcellularLocation>
        <location evidence="1">Cytoplasm</location>
    </subcellularLocation>
    <text evidence="1">Colocalizes with vimentin-type intermediate filaments.</text>
</comment>
<organism>
    <name type="scientific">Homo sapiens</name>
    <name type="common">Human</name>
    <dbReference type="NCBI Taxonomy" id="9606"/>
    <lineage>
        <taxon>Eukaryota</taxon>
        <taxon>Metazoa</taxon>
        <taxon>Chordata</taxon>
        <taxon>Craniata</taxon>
        <taxon>Vertebrata</taxon>
        <taxon>Euteleostomi</taxon>
        <taxon>Mammalia</taxon>
        <taxon>Eutheria</taxon>
        <taxon>Euarchontoglires</taxon>
        <taxon>Primates</taxon>
        <taxon>Haplorrhini</taxon>
        <taxon>Catarrhini</taxon>
        <taxon>Hominidae</taxon>
        <taxon>Homo</taxon>
    </lineage>
</organism>
<dbReference type="EMBL" id="AK124162">
    <property type="protein sequence ID" value="BAG54017.1"/>
    <property type="molecule type" value="mRNA"/>
</dbReference>
<dbReference type="EMBL" id="BC110802">
    <property type="protein sequence ID" value="AAI10803.1"/>
    <property type="molecule type" value="mRNA"/>
</dbReference>
<dbReference type="CCDS" id="CCDS32881.1"/>
<dbReference type="RefSeq" id="NP_001017921.1">
    <property type="nucleotide sequence ID" value="NM_001017921.4"/>
</dbReference>
<dbReference type="SMR" id="Q2NL98"/>
<dbReference type="BioGRID" id="134697">
    <property type="interactions" value="23"/>
</dbReference>
<dbReference type="FunCoup" id="Q2NL98">
    <property type="interactions" value="27"/>
</dbReference>
<dbReference type="IntAct" id="Q2NL98">
    <property type="interactions" value="30"/>
</dbReference>
<dbReference type="MINT" id="Q2NL98"/>
<dbReference type="STRING" id="9606.ENSP00000343348"/>
<dbReference type="iPTMnet" id="Q2NL98"/>
<dbReference type="PhosphoSitePlus" id="Q2NL98"/>
<dbReference type="BioMuta" id="VMAC"/>
<dbReference type="DMDM" id="121941615"/>
<dbReference type="jPOST" id="Q2NL98"/>
<dbReference type="MassIVE" id="Q2NL98"/>
<dbReference type="PaxDb" id="9606-ENSP00000343348"/>
<dbReference type="PeptideAtlas" id="Q2NL98"/>
<dbReference type="ProteomicsDB" id="61425"/>
<dbReference type="Antibodypedia" id="77776">
    <property type="antibodies" value="4 antibodies from 4 providers"/>
</dbReference>
<dbReference type="DNASU" id="400673"/>
<dbReference type="Ensembl" id="ENST00000339485.4">
    <property type="protein sequence ID" value="ENSP00000343348.2"/>
    <property type="gene ID" value="ENSG00000187650.4"/>
</dbReference>
<dbReference type="Ensembl" id="ENST00000709632.1">
    <property type="protein sequence ID" value="ENSP00000517810.1"/>
    <property type="gene ID" value="ENSG00000292061.1"/>
</dbReference>
<dbReference type="GeneID" id="400673"/>
<dbReference type="KEGG" id="hsa:400673"/>
<dbReference type="MANE-Select" id="ENST00000339485.4">
    <property type="protein sequence ID" value="ENSP00000343348.2"/>
    <property type="RefSeq nucleotide sequence ID" value="NM_001017921.4"/>
    <property type="RefSeq protein sequence ID" value="NP_001017921.1"/>
</dbReference>
<dbReference type="UCSC" id="uc002mds.5">
    <property type="organism name" value="human"/>
</dbReference>
<dbReference type="AGR" id="HGNC:33803"/>
<dbReference type="CTD" id="400673"/>
<dbReference type="GeneCards" id="VMAC"/>
<dbReference type="HGNC" id="HGNC:33803">
    <property type="gene designation" value="VMAC"/>
</dbReference>
<dbReference type="HPA" id="ENSG00000187650">
    <property type="expression patterns" value="Low tissue specificity"/>
</dbReference>
<dbReference type="neXtProt" id="NX_Q2NL98"/>
<dbReference type="OpenTargets" id="ENSG00000187650"/>
<dbReference type="PharmGKB" id="PA165394584"/>
<dbReference type="VEuPathDB" id="HostDB:ENSG00000187650"/>
<dbReference type="eggNOG" id="ENOG502SD5N">
    <property type="taxonomic scope" value="Eukaryota"/>
</dbReference>
<dbReference type="GeneTree" id="ENSGT00390000007212"/>
<dbReference type="HOGENOM" id="CLU_136281_0_0_1"/>
<dbReference type="InParanoid" id="Q2NL98"/>
<dbReference type="OMA" id="ERTVHGQ"/>
<dbReference type="OrthoDB" id="6413631at2759"/>
<dbReference type="PAN-GO" id="Q2NL98">
    <property type="GO annotations" value="1 GO annotation based on evolutionary models"/>
</dbReference>
<dbReference type="PhylomeDB" id="Q2NL98"/>
<dbReference type="TreeFam" id="TF332566"/>
<dbReference type="PathwayCommons" id="Q2NL98"/>
<dbReference type="SignaLink" id="Q2NL98"/>
<dbReference type="BioGRID-ORCS" id="400673">
    <property type="hits" value="13 hits in 1150 CRISPR screens"/>
</dbReference>
<dbReference type="ChiTaRS" id="VMAC">
    <property type="organism name" value="human"/>
</dbReference>
<dbReference type="GenomeRNAi" id="400673"/>
<dbReference type="Pharos" id="Q2NL98">
    <property type="development level" value="Tdark"/>
</dbReference>
<dbReference type="PRO" id="PR:Q2NL98"/>
<dbReference type="Proteomes" id="UP000005640">
    <property type="component" value="Chromosome 19"/>
</dbReference>
<dbReference type="RNAct" id="Q2NL98">
    <property type="molecule type" value="protein"/>
</dbReference>
<dbReference type="Bgee" id="ENSG00000187650">
    <property type="expression patterns" value="Expressed in primordial germ cell in gonad and 97 other cell types or tissues"/>
</dbReference>
<dbReference type="GO" id="GO:0005737">
    <property type="term" value="C:cytoplasm"/>
    <property type="evidence" value="ECO:0007669"/>
    <property type="project" value="UniProtKB-SubCell"/>
</dbReference>
<dbReference type="GO" id="GO:0045098">
    <property type="term" value="C:type III intermediate filament"/>
    <property type="evidence" value="ECO:0000318"/>
    <property type="project" value="GO_Central"/>
</dbReference>
<proteinExistence type="evidence at protein level"/>